<evidence type="ECO:0000255" key="1">
    <source>
        <dbReference type="PROSITE-ProRule" id="PRU00159"/>
    </source>
</evidence>
<evidence type="ECO:0000255" key="2">
    <source>
        <dbReference type="PROSITE-ProRule" id="PRU10027"/>
    </source>
</evidence>
<evidence type="ECO:0000305" key="3"/>
<proteinExistence type="evidence at transcript level"/>
<keyword id="KW-0067">ATP-binding</keyword>
<keyword id="KW-0418">Kinase</keyword>
<keyword id="KW-0547">Nucleotide-binding</keyword>
<keyword id="KW-0723">Serine/threonine-protein kinase</keyword>
<keyword id="KW-0808">Transferase</keyword>
<organism>
    <name type="scientific">Pisum sativum</name>
    <name type="common">Garden pea</name>
    <name type="synonym">Lathyrus oleraceus</name>
    <dbReference type="NCBI Taxonomy" id="3888"/>
    <lineage>
        <taxon>Eukaryota</taxon>
        <taxon>Viridiplantae</taxon>
        <taxon>Streptophyta</taxon>
        <taxon>Embryophyta</taxon>
        <taxon>Tracheophyta</taxon>
        <taxon>Spermatophyta</taxon>
        <taxon>Magnoliopsida</taxon>
        <taxon>eudicotyledons</taxon>
        <taxon>Gunneridae</taxon>
        <taxon>Pentapetalae</taxon>
        <taxon>rosids</taxon>
        <taxon>fabids</taxon>
        <taxon>Fabales</taxon>
        <taxon>Fabaceae</taxon>
        <taxon>Papilionoideae</taxon>
        <taxon>50 kb inversion clade</taxon>
        <taxon>NPAAA clade</taxon>
        <taxon>Hologalegina</taxon>
        <taxon>IRL clade</taxon>
        <taxon>Fabeae</taxon>
        <taxon>Pisum</taxon>
    </lineage>
</organism>
<sequence length="151" mass="17463">ALKEIRMDNEREGFPITAIREIKILKKLHHENVIKLKEIVTSPGPEKDDQGRPDGNKYKRLAIYMVFEYMDHDLTGLADRPGMRFTVPQIKCYMRQLLTGLHYCHVNQVLHRDIKGSNLLIDNEGNLKLADFGLARSFSNEIMQTLQIESL</sequence>
<name>CDC22_PEA</name>
<comment type="catalytic activity">
    <reaction>
        <text>L-seryl-[protein] + ATP = O-phospho-L-seryl-[protein] + ADP + H(+)</text>
        <dbReference type="Rhea" id="RHEA:17989"/>
        <dbReference type="Rhea" id="RHEA-COMP:9863"/>
        <dbReference type="Rhea" id="RHEA-COMP:11604"/>
        <dbReference type="ChEBI" id="CHEBI:15378"/>
        <dbReference type="ChEBI" id="CHEBI:29999"/>
        <dbReference type="ChEBI" id="CHEBI:30616"/>
        <dbReference type="ChEBI" id="CHEBI:83421"/>
        <dbReference type="ChEBI" id="CHEBI:456216"/>
        <dbReference type="EC" id="2.7.11.22"/>
    </reaction>
</comment>
<comment type="catalytic activity">
    <reaction>
        <text>L-threonyl-[protein] + ATP = O-phospho-L-threonyl-[protein] + ADP + H(+)</text>
        <dbReference type="Rhea" id="RHEA:46608"/>
        <dbReference type="Rhea" id="RHEA-COMP:11060"/>
        <dbReference type="Rhea" id="RHEA-COMP:11605"/>
        <dbReference type="ChEBI" id="CHEBI:15378"/>
        <dbReference type="ChEBI" id="CHEBI:30013"/>
        <dbReference type="ChEBI" id="CHEBI:30616"/>
        <dbReference type="ChEBI" id="CHEBI:61977"/>
        <dbReference type="ChEBI" id="CHEBI:456216"/>
        <dbReference type="EC" id="2.7.11.22"/>
    </reaction>
</comment>
<comment type="catalytic activity">
    <reaction>
        <text>[DNA-directed RNA polymerase] + ATP = phospho-[DNA-directed RNA polymerase] + ADP + H(+)</text>
        <dbReference type="Rhea" id="RHEA:10216"/>
        <dbReference type="Rhea" id="RHEA-COMP:11321"/>
        <dbReference type="Rhea" id="RHEA-COMP:11322"/>
        <dbReference type="ChEBI" id="CHEBI:15378"/>
        <dbReference type="ChEBI" id="CHEBI:30616"/>
        <dbReference type="ChEBI" id="CHEBI:43176"/>
        <dbReference type="ChEBI" id="CHEBI:68546"/>
        <dbReference type="ChEBI" id="CHEBI:456216"/>
        <dbReference type="EC" id="2.7.11.23"/>
    </reaction>
</comment>
<comment type="similarity">
    <text evidence="3">Belongs to the protein kinase superfamily. CMGC Ser/Thr protein kinase family. CDC2/CDKX subfamily.</text>
</comment>
<reference key="1">
    <citation type="journal article" date="1991" name="Plant Mol. Biol.">
        <title>Cloning of the pea cdc2 homologue by efficient immunological screening of PCR products.</title>
        <authorList>
            <person name="Feiler H.S."/>
            <person name="Jacobs T.W."/>
        </authorList>
    </citation>
    <scope>NUCLEOTIDE SEQUENCE [MRNA]</scope>
    <source>
        <strain>cv. Alaska</strain>
    </source>
</reference>
<feature type="chain" id="PRO_0000085758" description="Cell division control protein 2 homolog 2">
    <location>
        <begin position="1" status="less than"/>
        <end position="151" status="greater than"/>
    </location>
</feature>
<feature type="domain" description="Protein kinase" evidence="1">
    <location>
        <begin position="1" status="less than"/>
        <end position="151" status="greater than"/>
    </location>
</feature>
<feature type="active site" description="Proton acceptor" evidence="1 2">
    <location>
        <position position="113"/>
    </location>
</feature>
<feature type="binding site" evidence="1">
    <location>
        <position position="3"/>
    </location>
    <ligand>
        <name>ATP</name>
        <dbReference type="ChEBI" id="CHEBI:30616"/>
    </ligand>
</feature>
<feature type="non-terminal residue">
    <location>
        <position position="1"/>
    </location>
</feature>
<feature type="non-terminal residue">
    <location>
        <position position="151"/>
    </location>
</feature>
<protein>
    <recommendedName>
        <fullName>Cell division control protein 2 homolog 2</fullName>
        <ecNumber>2.7.11.22</ecNumber>
        <ecNumber>2.7.11.23</ecNumber>
    </recommendedName>
</protein>
<dbReference type="EC" id="2.7.11.22"/>
<dbReference type="EC" id="2.7.11.23"/>
<dbReference type="EMBL" id="X56554">
    <property type="protein sequence ID" value="CAA39904.1"/>
    <property type="molecule type" value="mRNA"/>
</dbReference>
<dbReference type="PIR" id="S17451">
    <property type="entry name" value="S17451"/>
</dbReference>
<dbReference type="SMR" id="P28567"/>
<dbReference type="GO" id="GO:0000307">
    <property type="term" value="C:cyclin-dependent protein kinase holoenzyme complex"/>
    <property type="evidence" value="ECO:0007669"/>
    <property type="project" value="TreeGrafter"/>
</dbReference>
<dbReference type="GO" id="GO:0005634">
    <property type="term" value="C:nucleus"/>
    <property type="evidence" value="ECO:0007669"/>
    <property type="project" value="TreeGrafter"/>
</dbReference>
<dbReference type="GO" id="GO:0005524">
    <property type="term" value="F:ATP binding"/>
    <property type="evidence" value="ECO:0007669"/>
    <property type="project" value="UniProtKB-KW"/>
</dbReference>
<dbReference type="GO" id="GO:0004693">
    <property type="term" value="F:cyclin-dependent protein serine/threonine kinase activity"/>
    <property type="evidence" value="ECO:0007669"/>
    <property type="project" value="UniProtKB-EC"/>
</dbReference>
<dbReference type="GO" id="GO:0106310">
    <property type="term" value="F:protein serine kinase activity"/>
    <property type="evidence" value="ECO:0007669"/>
    <property type="project" value="RHEA"/>
</dbReference>
<dbReference type="GO" id="GO:0008353">
    <property type="term" value="F:RNA polymerase II CTD heptapeptide repeat kinase activity"/>
    <property type="evidence" value="ECO:0007669"/>
    <property type="project" value="UniProtKB-EC"/>
</dbReference>
<dbReference type="GO" id="GO:0032968">
    <property type="term" value="P:positive regulation of transcription elongation by RNA polymerase II"/>
    <property type="evidence" value="ECO:0007669"/>
    <property type="project" value="TreeGrafter"/>
</dbReference>
<dbReference type="Gene3D" id="3.30.200.20">
    <property type="entry name" value="Phosphorylase Kinase, domain 1"/>
    <property type="match status" value="1"/>
</dbReference>
<dbReference type="Gene3D" id="1.10.510.10">
    <property type="entry name" value="Transferase(Phosphotransferase) domain 1"/>
    <property type="match status" value="1"/>
</dbReference>
<dbReference type="InterPro" id="IPR050108">
    <property type="entry name" value="CDK"/>
</dbReference>
<dbReference type="InterPro" id="IPR011009">
    <property type="entry name" value="Kinase-like_dom_sf"/>
</dbReference>
<dbReference type="InterPro" id="IPR000719">
    <property type="entry name" value="Prot_kinase_dom"/>
</dbReference>
<dbReference type="InterPro" id="IPR008271">
    <property type="entry name" value="Ser/Thr_kinase_AS"/>
</dbReference>
<dbReference type="PANTHER" id="PTHR24056">
    <property type="entry name" value="CELL DIVISION PROTEIN KINASE"/>
    <property type="match status" value="1"/>
</dbReference>
<dbReference type="PANTHER" id="PTHR24056:SF546">
    <property type="entry name" value="CYCLIN-DEPENDENT KINASE 12"/>
    <property type="match status" value="1"/>
</dbReference>
<dbReference type="Pfam" id="PF00069">
    <property type="entry name" value="Pkinase"/>
    <property type="match status" value="1"/>
</dbReference>
<dbReference type="SMART" id="SM00220">
    <property type="entry name" value="S_TKc"/>
    <property type="match status" value="1"/>
</dbReference>
<dbReference type="SUPFAM" id="SSF56112">
    <property type="entry name" value="Protein kinase-like (PK-like)"/>
    <property type="match status" value="1"/>
</dbReference>
<dbReference type="PROSITE" id="PS50011">
    <property type="entry name" value="PROTEIN_KINASE_DOM"/>
    <property type="match status" value="1"/>
</dbReference>
<dbReference type="PROSITE" id="PS00108">
    <property type="entry name" value="PROTEIN_KINASE_ST"/>
    <property type="match status" value="1"/>
</dbReference>
<accession>P28567</accession>